<gene>
    <name type="primary">p38c</name>
    <name type="ORF">CG33338</name>
</gene>
<protein>
    <recommendedName>
        <fullName>Putative mitogen-activated protein kinase 14C</fullName>
        <shortName>MAP kinase 14C</shortName>
        <shortName>MAPK 14C</shortName>
        <ecNumber>2.7.11.24</ecNumber>
    </recommendedName>
    <alternativeName>
        <fullName>MAP kinase p38c</fullName>
    </alternativeName>
</protein>
<accession>P83100</accession>
<accession>A8E6X5</accession>
<dbReference type="EC" id="2.7.11.24"/>
<dbReference type="EMBL" id="AE014297">
    <property type="protein sequence ID" value="AAS65203.1"/>
    <property type="molecule type" value="Genomic_DNA"/>
</dbReference>
<dbReference type="EMBL" id="BT030917">
    <property type="protein sequence ID" value="ABV82299.1"/>
    <property type="molecule type" value="mRNA"/>
</dbReference>
<dbReference type="EMBL" id="BT030937">
    <property type="protein sequence ID" value="ABV82319.1"/>
    <property type="molecule type" value="mRNA"/>
</dbReference>
<dbReference type="EMBL" id="BT030954">
    <property type="protein sequence ID" value="ABV82336.1"/>
    <property type="molecule type" value="mRNA"/>
</dbReference>
<dbReference type="EMBL" id="BT032708">
    <property type="protein sequence ID" value="ACD81722.1"/>
    <property type="molecule type" value="mRNA"/>
</dbReference>
<dbReference type="RefSeq" id="NP_996277.1">
    <property type="nucleotide sequence ID" value="NM_206554.2"/>
</dbReference>
<dbReference type="SMR" id="P83100"/>
<dbReference type="BioGRID" id="77547">
    <property type="interactions" value="29"/>
</dbReference>
<dbReference type="FunCoup" id="P83100">
    <property type="interactions" value="211"/>
</dbReference>
<dbReference type="IntAct" id="P83100">
    <property type="interactions" value="3"/>
</dbReference>
<dbReference type="STRING" id="7227.FBpp0083967"/>
<dbReference type="PaxDb" id="7227-FBpp0083967"/>
<dbReference type="DNASU" id="2768679"/>
<dbReference type="EnsemblMetazoa" id="FBtr0084582">
    <property type="protein sequence ID" value="FBpp0083967"/>
    <property type="gene ID" value="FBgn0267339"/>
</dbReference>
<dbReference type="GeneID" id="2768679"/>
<dbReference type="KEGG" id="dme:Dmel_CG33338"/>
<dbReference type="UCSC" id="CG33338-RA">
    <property type="organism name" value="d. melanogaster"/>
</dbReference>
<dbReference type="AGR" id="FB:FBgn0267339"/>
<dbReference type="CTD" id="2768679"/>
<dbReference type="FlyBase" id="FBgn0267339">
    <property type="gene designation" value="p38c"/>
</dbReference>
<dbReference type="VEuPathDB" id="VectorBase:FBgn0267339"/>
<dbReference type="eggNOG" id="KOG0660">
    <property type="taxonomic scope" value="Eukaryota"/>
</dbReference>
<dbReference type="GeneTree" id="ENSGT00940000170951"/>
<dbReference type="HOGENOM" id="CLU_000288_181_1_1"/>
<dbReference type="InParanoid" id="P83100"/>
<dbReference type="OMA" id="KCWKELV"/>
<dbReference type="OrthoDB" id="192887at2759"/>
<dbReference type="PhylomeDB" id="P83100"/>
<dbReference type="Reactome" id="R-DME-168638">
    <property type="pathway name" value="NOD1/2 Signaling Pathway"/>
</dbReference>
<dbReference type="Reactome" id="R-DME-171007">
    <property type="pathway name" value="p38MAPK events"/>
</dbReference>
<dbReference type="Reactome" id="R-DME-198753">
    <property type="pathway name" value="ERK/MAPK targets"/>
</dbReference>
<dbReference type="Reactome" id="R-DME-2559580">
    <property type="pathway name" value="Oxidative Stress Induced Senescence"/>
</dbReference>
<dbReference type="Reactome" id="R-DME-418592">
    <property type="pathway name" value="ADP signalling through P2Y purinoceptor 1"/>
</dbReference>
<dbReference type="Reactome" id="R-DME-432142">
    <property type="pathway name" value="Platelet sensitization by LDL"/>
</dbReference>
<dbReference type="Reactome" id="R-DME-4420097">
    <property type="pathway name" value="VEGFA-VEGFR2 Pathway"/>
</dbReference>
<dbReference type="Reactome" id="R-DME-450302">
    <property type="pathway name" value="activated TAK1 mediates p38 MAPK activation"/>
</dbReference>
<dbReference type="Reactome" id="R-DME-450341">
    <property type="pathway name" value="Activation of the AP-1 family of transcription factors"/>
</dbReference>
<dbReference type="Reactome" id="R-DME-525793">
    <property type="pathway name" value="Myogenesis"/>
</dbReference>
<dbReference type="Reactome" id="R-DME-5675221">
    <property type="pathway name" value="Negative regulation of MAPK pathway"/>
</dbReference>
<dbReference type="Reactome" id="R-DME-6798695">
    <property type="pathway name" value="Neutrophil degranulation"/>
</dbReference>
<dbReference type="Reactome" id="R-DME-9824585">
    <property type="pathway name" value="Regulation of MITF-M-dependent genes involved in pigmentation"/>
</dbReference>
<dbReference type="BioGRID-ORCS" id="2768679">
    <property type="hits" value="0 hits in 3 CRISPR screens"/>
</dbReference>
<dbReference type="GenomeRNAi" id="2768679"/>
<dbReference type="PRO" id="PR:P83100"/>
<dbReference type="Proteomes" id="UP000000803">
    <property type="component" value="Chromosome 3R"/>
</dbReference>
<dbReference type="Bgee" id="FBgn0267339">
    <property type="expression patterns" value="Expressed in midgut and 22 other cell types or tissues"/>
</dbReference>
<dbReference type="GO" id="GO:0005737">
    <property type="term" value="C:cytoplasm"/>
    <property type="evidence" value="ECO:0000314"/>
    <property type="project" value="FlyBase"/>
</dbReference>
<dbReference type="GO" id="GO:0005634">
    <property type="term" value="C:nucleus"/>
    <property type="evidence" value="ECO:0000318"/>
    <property type="project" value="GO_Central"/>
</dbReference>
<dbReference type="GO" id="GO:0005524">
    <property type="term" value="F:ATP binding"/>
    <property type="evidence" value="ECO:0007669"/>
    <property type="project" value="UniProtKB-KW"/>
</dbReference>
<dbReference type="GO" id="GO:0004707">
    <property type="term" value="F:MAP kinase activity"/>
    <property type="evidence" value="ECO:0000314"/>
    <property type="project" value="FlyBase"/>
</dbReference>
<dbReference type="GO" id="GO:0106310">
    <property type="term" value="F:protein serine kinase activity"/>
    <property type="evidence" value="ECO:0007669"/>
    <property type="project" value="RHEA"/>
</dbReference>
<dbReference type="GO" id="GO:0004674">
    <property type="term" value="F:protein serine/threonine kinase activity"/>
    <property type="evidence" value="ECO:0000318"/>
    <property type="project" value="GO_Central"/>
</dbReference>
<dbReference type="GO" id="GO:0035556">
    <property type="term" value="P:intracellular signal transduction"/>
    <property type="evidence" value="ECO:0000318"/>
    <property type="project" value="GO_Central"/>
</dbReference>
<dbReference type="GO" id="GO:0038066">
    <property type="term" value="P:p38MAPK cascade"/>
    <property type="evidence" value="ECO:0000315"/>
    <property type="project" value="FlyBase"/>
</dbReference>
<dbReference type="GO" id="GO:0048082">
    <property type="term" value="P:regulation of adult chitin-containing cuticle pigmentation"/>
    <property type="evidence" value="ECO:0000316"/>
    <property type="project" value="FlyBase"/>
</dbReference>
<dbReference type="GO" id="GO:0010883">
    <property type="term" value="P:regulation of lipid storage"/>
    <property type="evidence" value="ECO:0000315"/>
    <property type="project" value="FlyBase"/>
</dbReference>
<dbReference type="GO" id="GO:1902882">
    <property type="term" value="P:regulation of response to oxidative stress"/>
    <property type="evidence" value="ECO:0000315"/>
    <property type="project" value="FlyBase"/>
</dbReference>
<dbReference type="GO" id="GO:0009617">
    <property type="term" value="P:response to bacterium"/>
    <property type="evidence" value="ECO:0000315"/>
    <property type="project" value="FlyBase"/>
</dbReference>
<dbReference type="CDD" id="cd07851">
    <property type="entry name" value="STKc_p38"/>
    <property type="match status" value="1"/>
</dbReference>
<dbReference type="FunFam" id="1.10.510.10:FF:000684">
    <property type="entry name" value="Mitogen-activated protein kinase"/>
    <property type="match status" value="1"/>
</dbReference>
<dbReference type="Gene3D" id="3.30.200.20">
    <property type="entry name" value="Phosphorylase Kinase, domain 1"/>
    <property type="match status" value="1"/>
</dbReference>
<dbReference type="Gene3D" id="1.10.510.10">
    <property type="entry name" value="Transferase(Phosphotransferase) domain 1"/>
    <property type="match status" value="1"/>
</dbReference>
<dbReference type="InterPro" id="IPR011009">
    <property type="entry name" value="Kinase-like_dom_sf"/>
</dbReference>
<dbReference type="InterPro" id="IPR050117">
    <property type="entry name" value="MAP_kinase"/>
</dbReference>
<dbReference type="InterPro" id="IPR003527">
    <property type="entry name" value="MAP_kinase_CS"/>
</dbReference>
<dbReference type="InterPro" id="IPR000719">
    <property type="entry name" value="Prot_kinase_dom"/>
</dbReference>
<dbReference type="InterPro" id="IPR017441">
    <property type="entry name" value="Protein_kinase_ATP_BS"/>
</dbReference>
<dbReference type="PANTHER" id="PTHR24055">
    <property type="entry name" value="MITOGEN-ACTIVATED PROTEIN KINASE"/>
    <property type="match status" value="1"/>
</dbReference>
<dbReference type="Pfam" id="PF00069">
    <property type="entry name" value="Pkinase"/>
    <property type="match status" value="1"/>
</dbReference>
<dbReference type="SMART" id="SM00220">
    <property type="entry name" value="S_TKc"/>
    <property type="match status" value="1"/>
</dbReference>
<dbReference type="SUPFAM" id="SSF56112">
    <property type="entry name" value="Protein kinase-like (PK-like)"/>
    <property type="match status" value="1"/>
</dbReference>
<dbReference type="PROSITE" id="PS01351">
    <property type="entry name" value="MAPK"/>
    <property type="match status" value="1"/>
</dbReference>
<dbReference type="PROSITE" id="PS00107">
    <property type="entry name" value="PROTEIN_KINASE_ATP"/>
    <property type="match status" value="1"/>
</dbReference>
<dbReference type="PROSITE" id="PS50011">
    <property type="entry name" value="PROTEIN_KINASE_DOM"/>
    <property type="match status" value="1"/>
</dbReference>
<comment type="function">
    <text>Kinase involved in a signal transduction pathway.</text>
</comment>
<comment type="catalytic activity">
    <reaction>
        <text>L-seryl-[protein] + ATP = O-phospho-L-seryl-[protein] + ADP + H(+)</text>
        <dbReference type="Rhea" id="RHEA:17989"/>
        <dbReference type="Rhea" id="RHEA-COMP:9863"/>
        <dbReference type="Rhea" id="RHEA-COMP:11604"/>
        <dbReference type="ChEBI" id="CHEBI:15378"/>
        <dbReference type="ChEBI" id="CHEBI:29999"/>
        <dbReference type="ChEBI" id="CHEBI:30616"/>
        <dbReference type="ChEBI" id="CHEBI:83421"/>
        <dbReference type="ChEBI" id="CHEBI:456216"/>
        <dbReference type="EC" id="2.7.11.24"/>
    </reaction>
</comment>
<comment type="catalytic activity">
    <reaction>
        <text>L-threonyl-[protein] + ATP = O-phospho-L-threonyl-[protein] + ADP + H(+)</text>
        <dbReference type="Rhea" id="RHEA:46608"/>
        <dbReference type="Rhea" id="RHEA-COMP:11060"/>
        <dbReference type="Rhea" id="RHEA-COMP:11605"/>
        <dbReference type="ChEBI" id="CHEBI:15378"/>
        <dbReference type="ChEBI" id="CHEBI:30013"/>
        <dbReference type="ChEBI" id="CHEBI:30616"/>
        <dbReference type="ChEBI" id="CHEBI:61977"/>
        <dbReference type="ChEBI" id="CHEBI:456216"/>
        <dbReference type="EC" id="2.7.11.24"/>
    </reaction>
</comment>
<comment type="cofactor">
    <cofactor evidence="1">
        <name>Mg(2+)</name>
        <dbReference type="ChEBI" id="CHEBI:18420"/>
    </cofactor>
</comment>
<comment type="PTM">
    <text evidence="1">The phosphorylation on Thr-177 activates the enzyme (By similarity). A conserved Tyr, which must also be phosphorylated to activate the enzyme in closely related sequences, is replaced by His-179 in this sequence.</text>
</comment>
<comment type="similarity">
    <text evidence="3">Belongs to the protein kinase superfamily. CMGC Ser/Thr protein kinase family. MAP kinase subfamily.</text>
</comment>
<feature type="chain" id="PRO_0000186302" description="Putative mitogen-activated protein kinase 14C">
    <location>
        <begin position="1"/>
        <end position="356"/>
    </location>
</feature>
<feature type="domain" description="Protein kinase" evidence="2">
    <location>
        <begin position="20"/>
        <end position="305"/>
    </location>
</feature>
<feature type="active site" description="Proton acceptor" evidence="2">
    <location>
        <position position="147"/>
    </location>
</feature>
<feature type="binding site" evidence="2">
    <location>
        <begin position="26"/>
        <end position="34"/>
    </location>
    <ligand>
        <name>ATP</name>
        <dbReference type="ChEBI" id="CHEBI:30616"/>
    </ligand>
</feature>
<feature type="binding site" evidence="2">
    <location>
        <position position="49"/>
    </location>
    <ligand>
        <name>ATP</name>
        <dbReference type="ChEBI" id="CHEBI:30616"/>
    </ligand>
</feature>
<feature type="modified residue" description="Phosphothreonine" evidence="1">
    <location>
        <position position="177"/>
    </location>
</feature>
<evidence type="ECO:0000250" key="1"/>
<evidence type="ECO:0000255" key="2">
    <source>
        <dbReference type="PROSITE-ProRule" id="PRU00159"/>
    </source>
</evidence>
<evidence type="ECO:0000305" key="3"/>
<sequence>MPEFVRVAINESLWEFPDIYEFVRFLGGGSFGQVAKVRLRGTENYFAMKRLMRPFEREEDAKGTYREIRLLKHMNHRNVISLLNVFHPPAHNMMEFQQVYLVTHLMDADLHRYSRSKRMSDQEIRIILYQILRGLKYIHSAGVVHRDLKPCNIAVNGNSEVRILDFGLSRMCADKMTDHVGTMWYLAPEIIFLRGQYTKAIDVWSVGCILAELITDRVLFRGENYVSQIRCLINIMGTPTREFITGISMERSRNYLEGYPLRQRCDFHHLFMGYDVQAIDLMEKMLEMVPEKRITAAEAMLHPYLRDLIEPHHHAEDTAPVYDQNFENMVLPVKCWKELVSHEIRNFRPDQLDLHF</sequence>
<organism>
    <name type="scientific">Drosophila melanogaster</name>
    <name type="common">Fruit fly</name>
    <dbReference type="NCBI Taxonomy" id="7227"/>
    <lineage>
        <taxon>Eukaryota</taxon>
        <taxon>Metazoa</taxon>
        <taxon>Ecdysozoa</taxon>
        <taxon>Arthropoda</taxon>
        <taxon>Hexapoda</taxon>
        <taxon>Insecta</taxon>
        <taxon>Pterygota</taxon>
        <taxon>Neoptera</taxon>
        <taxon>Endopterygota</taxon>
        <taxon>Diptera</taxon>
        <taxon>Brachycera</taxon>
        <taxon>Muscomorpha</taxon>
        <taxon>Ephydroidea</taxon>
        <taxon>Drosophilidae</taxon>
        <taxon>Drosophila</taxon>
        <taxon>Sophophora</taxon>
    </lineage>
</organism>
<reference key="1">
    <citation type="journal article" date="2000" name="Science">
        <title>The genome sequence of Drosophila melanogaster.</title>
        <authorList>
            <person name="Adams M.D."/>
            <person name="Celniker S.E."/>
            <person name="Holt R.A."/>
            <person name="Evans C.A."/>
            <person name="Gocayne J.D."/>
            <person name="Amanatides P.G."/>
            <person name="Scherer S.E."/>
            <person name="Li P.W."/>
            <person name="Hoskins R.A."/>
            <person name="Galle R.F."/>
            <person name="George R.A."/>
            <person name="Lewis S.E."/>
            <person name="Richards S."/>
            <person name="Ashburner M."/>
            <person name="Henderson S.N."/>
            <person name="Sutton G.G."/>
            <person name="Wortman J.R."/>
            <person name="Yandell M.D."/>
            <person name="Zhang Q."/>
            <person name="Chen L.X."/>
            <person name="Brandon R.C."/>
            <person name="Rogers Y.-H.C."/>
            <person name="Blazej R.G."/>
            <person name="Champe M."/>
            <person name="Pfeiffer B.D."/>
            <person name="Wan K.H."/>
            <person name="Doyle C."/>
            <person name="Baxter E.G."/>
            <person name="Helt G."/>
            <person name="Nelson C.R."/>
            <person name="Miklos G.L.G."/>
            <person name="Abril J.F."/>
            <person name="Agbayani A."/>
            <person name="An H.-J."/>
            <person name="Andrews-Pfannkoch C."/>
            <person name="Baldwin D."/>
            <person name="Ballew R.M."/>
            <person name="Basu A."/>
            <person name="Baxendale J."/>
            <person name="Bayraktaroglu L."/>
            <person name="Beasley E.M."/>
            <person name="Beeson K.Y."/>
            <person name="Benos P.V."/>
            <person name="Berman B.P."/>
            <person name="Bhandari D."/>
            <person name="Bolshakov S."/>
            <person name="Borkova D."/>
            <person name="Botchan M.R."/>
            <person name="Bouck J."/>
            <person name="Brokstein P."/>
            <person name="Brottier P."/>
            <person name="Burtis K.C."/>
            <person name="Busam D.A."/>
            <person name="Butler H."/>
            <person name="Cadieu E."/>
            <person name="Center A."/>
            <person name="Chandra I."/>
            <person name="Cherry J.M."/>
            <person name="Cawley S."/>
            <person name="Dahlke C."/>
            <person name="Davenport L.B."/>
            <person name="Davies P."/>
            <person name="de Pablos B."/>
            <person name="Delcher A."/>
            <person name="Deng Z."/>
            <person name="Mays A.D."/>
            <person name="Dew I."/>
            <person name="Dietz S.M."/>
            <person name="Dodson K."/>
            <person name="Doup L.E."/>
            <person name="Downes M."/>
            <person name="Dugan-Rocha S."/>
            <person name="Dunkov B.C."/>
            <person name="Dunn P."/>
            <person name="Durbin K.J."/>
            <person name="Evangelista C.C."/>
            <person name="Ferraz C."/>
            <person name="Ferriera S."/>
            <person name="Fleischmann W."/>
            <person name="Fosler C."/>
            <person name="Gabrielian A.E."/>
            <person name="Garg N.S."/>
            <person name="Gelbart W.M."/>
            <person name="Glasser K."/>
            <person name="Glodek A."/>
            <person name="Gong F."/>
            <person name="Gorrell J.H."/>
            <person name="Gu Z."/>
            <person name="Guan P."/>
            <person name="Harris M."/>
            <person name="Harris N.L."/>
            <person name="Harvey D.A."/>
            <person name="Heiman T.J."/>
            <person name="Hernandez J.R."/>
            <person name="Houck J."/>
            <person name="Hostin D."/>
            <person name="Houston K.A."/>
            <person name="Howland T.J."/>
            <person name="Wei M.-H."/>
            <person name="Ibegwam C."/>
            <person name="Jalali M."/>
            <person name="Kalush F."/>
            <person name="Karpen G.H."/>
            <person name="Ke Z."/>
            <person name="Kennison J.A."/>
            <person name="Ketchum K.A."/>
            <person name="Kimmel B.E."/>
            <person name="Kodira C.D."/>
            <person name="Kraft C.L."/>
            <person name="Kravitz S."/>
            <person name="Kulp D."/>
            <person name="Lai Z."/>
            <person name="Lasko P."/>
            <person name="Lei Y."/>
            <person name="Levitsky A.A."/>
            <person name="Li J.H."/>
            <person name="Li Z."/>
            <person name="Liang Y."/>
            <person name="Lin X."/>
            <person name="Liu X."/>
            <person name="Mattei B."/>
            <person name="McIntosh T.C."/>
            <person name="McLeod M.P."/>
            <person name="McPherson D."/>
            <person name="Merkulov G."/>
            <person name="Milshina N.V."/>
            <person name="Mobarry C."/>
            <person name="Morris J."/>
            <person name="Moshrefi A."/>
            <person name="Mount S.M."/>
            <person name="Moy M."/>
            <person name="Murphy B."/>
            <person name="Murphy L."/>
            <person name="Muzny D.M."/>
            <person name="Nelson D.L."/>
            <person name="Nelson D.R."/>
            <person name="Nelson K.A."/>
            <person name="Nixon K."/>
            <person name="Nusskern D.R."/>
            <person name="Pacleb J.M."/>
            <person name="Palazzolo M."/>
            <person name="Pittman G.S."/>
            <person name="Pan S."/>
            <person name="Pollard J."/>
            <person name="Puri V."/>
            <person name="Reese M.G."/>
            <person name="Reinert K."/>
            <person name="Remington K."/>
            <person name="Saunders R.D.C."/>
            <person name="Scheeler F."/>
            <person name="Shen H."/>
            <person name="Shue B.C."/>
            <person name="Siden-Kiamos I."/>
            <person name="Simpson M."/>
            <person name="Skupski M.P."/>
            <person name="Smith T.J."/>
            <person name="Spier E."/>
            <person name="Spradling A.C."/>
            <person name="Stapleton M."/>
            <person name="Strong R."/>
            <person name="Sun E."/>
            <person name="Svirskas R."/>
            <person name="Tector C."/>
            <person name="Turner R."/>
            <person name="Venter E."/>
            <person name="Wang A.H."/>
            <person name="Wang X."/>
            <person name="Wang Z.-Y."/>
            <person name="Wassarman D.A."/>
            <person name="Weinstock G.M."/>
            <person name="Weissenbach J."/>
            <person name="Williams S.M."/>
            <person name="Woodage T."/>
            <person name="Worley K.C."/>
            <person name="Wu D."/>
            <person name="Yang S."/>
            <person name="Yao Q.A."/>
            <person name="Ye J."/>
            <person name="Yeh R.-F."/>
            <person name="Zaveri J.S."/>
            <person name="Zhan M."/>
            <person name="Zhang G."/>
            <person name="Zhao Q."/>
            <person name="Zheng L."/>
            <person name="Zheng X.H."/>
            <person name="Zhong F.N."/>
            <person name="Zhong W."/>
            <person name="Zhou X."/>
            <person name="Zhu S.C."/>
            <person name="Zhu X."/>
            <person name="Smith H.O."/>
            <person name="Gibbs R.A."/>
            <person name="Myers E.W."/>
            <person name="Rubin G.M."/>
            <person name="Venter J.C."/>
        </authorList>
    </citation>
    <scope>NUCLEOTIDE SEQUENCE [LARGE SCALE GENOMIC DNA]</scope>
    <source>
        <strain>Berkeley</strain>
    </source>
</reference>
<reference key="2">
    <citation type="journal article" date="2002" name="Genome Biol.">
        <title>Annotation of the Drosophila melanogaster euchromatic genome: a systematic review.</title>
        <authorList>
            <person name="Misra S."/>
            <person name="Crosby M.A."/>
            <person name="Mungall C.J."/>
            <person name="Matthews B.B."/>
            <person name="Campbell K.S."/>
            <person name="Hradecky P."/>
            <person name="Huang Y."/>
            <person name="Kaminker J.S."/>
            <person name="Millburn G.H."/>
            <person name="Prochnik S.E."/>
            <person name="Smith C.D."/>
            <person name="Tupy J.L."/>
            <person name="Whitfield E.J."/>
            <person name="Bayraktaroglu L."/>
            <person name="Berman B.P."/>
            <person name="Bettencourt B.R."/>
            <person name="Celniker S.E."/>
            <person name="de Grey A.D.N.J."/>
            <person name="Drysdale R.A."/>
            <person name="Harris N.L."/>
            <person name="Richter J."/>
            <person name="Russo S."/>
            <person name="Schroeder A.J."/>
            <person name="Shu S.Q."/>
            <person name="Stapleton M."/>
            <person name="Yamada C."/>
            <person name="Ashburner M."/>
            <person name="Gelbart W.M."/>
            <person name="Rubin G.M."/>
            <person name="Lewis S.E."/>
        </authorList>
    </citation>
    <scope>GENOME REANNOTATION</scope>
    <source>
        <strain>Berkeley</strain>
    </source>
</reference>
<reference key="3">
    <citation type="submission" date="2008-05" db="EMBL/GenBank/DDBJ databases">
        <authorList>
            <person name="Stapleton M."/>
            <person name="Carlson J.W."/>
            <person name="Booth B."/>
            <person name="Frise E."/>
            <person name="Kapadia B."/>
            <person name="Park S."/>
            <person name="Wan K.H."/>
            <person name="Yu C."/>
            <person name="Celniker S.E."/>
        </authorList>
    </citation>
    <scope>NUCLEOTIDE SEQUENCE [LARGE SCALE MRNA]</scope>
    <source>
        <strain>Berkeley</strain>
    </source>
</reference>
<proteinExistence type="evidence at transcript level"/>
<name>MK14C_DROME</name>
<keyword id="KW-0067">ATP-binding</keyword>
<keyword id="KW-0418">Kinase</keyword>
<keyword id="KW-0547">Nucleotide-binding</keyword>
<keyword id="KW-0597">Phosphoprotein</keyword>
<keyword id="KW-1185">Reference proteome</keyword>
<keyword id="KW-0723">Serine/threonine-protein kinase</keyword>
<keyword id="KW-0808">Transferase</keyword>